<keyword id="KW-0378">Hydrolase</keyword>
<keyword id="KW-0460">Magnesium</keyword>
<keyword id="KW-0479">Metal-binding</keyword>
<keyword id="KW-0546">Nucleotide metabolism</keyword>
<keyword id="KW-0547">Nucleotide-binding</keyword>
<gene>
    <name type="ordered locus">Tpet_0766</name>
</gene>
<feature type="chain" id="PRO_1000087381" description="dITP/XTP pyrophosphatase">
    <location>
        <begin position="1"/>
        <end position="196"/>
    </location>
</feature>
<feature type="active site" description="Proton acceptor" evidence="1">
    <location>
        <position position="68"/>
    </location>
</feature>
<feature type="binding site" evidence="1">
    <location>
        <begin position="10"/>
        <end position="15"/>
    </location>
    <ligand>
        <name>substrate</name>
    </ligand>
</feature>
<feature type="binding site" evidence="1">
    <location>
        <position position="68"/>
    </location>
    <ligand>
        <name>Mg(2+)</name>
        <dbReference type="ChEBI" id="CHEBI:18420"/>
    </ligand>
</feature>
<feature type="binding site" evidence="1">
    <location>
        <position position="69"/>
    </location>
    <ligand>
        <name>substrate</name>
    </ligand>
</feature>
<feature type="binding site" evidence="1">
    <location>
        <begin position="148"/>
        <end position="151"/>
    </location>
    <ligand>
        <name>substrate</name>
    </ligand>
</feature>
<feature type="binding site" evidence="1">
    <location>
        <begin position="175"/>
        <end position="176"/>
    </location>
    <ligand>
        <name>substrate</name>
    </ligand>
</feature>
<name>IXTPA_THEP1</name>
<sequence length="196" mass="22338">MKKLTVYLATTNPHKVEEIKMIAPEWMEILPSPEKIEVVEDGETFLENSVKKAVVYGKKLKHPVMADDSGLVIYSLGGFPGVMSARFMEEHSYKEKMRTILKMLEGKDRRAAFVCSATFFDPVENTLISVEDRVEGRIANEIRGTGGFGYDPFFIPDGYDKTFGEIPHLKEKISHRSKAFRKLFSVLEKILESENR</sequence>
<proteinExistence type="inferred from homology"/>
<dbReference type="EC" id="3.6.1.66" evidence="1"/>
<dbReference type="EMBL" id="CP000702">
    <property type="protein sequence ID" value="ABQ46785.1"/>
    <property type="molecule type" value="Genomic_DNA"/>
</dbReference>
<dbReference type="RefSeq" id="WP_004082779.1">
    <property type="nucleotide sequence ID" value="NC_009486.1"/>
</dbReference>
<dbReference type="SMR" id="A5IKR2"/>
<dbReference type="STRING" id="390874.Tpet_0766"/>
<dbReference type="KEGG" id="tpt:Tpet_0766"/>
<dbReference type="eggNOG" id="COG0127">
    <property type="taxonomic scope" value="Bacteria"/>
</dbReference>
<dbReference type="HOGENOM" id="CLU_082080_0_2_0"/>
<dbReference type="Proteomes" id="UP000006558">
    <property type="component" value="Chromosome"/>
</dbReference>
<dbReference type="GO" id="GO:0005829">
    <property type="term" value="C:cytosol"/>
    <property type="evidence" value="ECO:0007669"/>
    <property type="project" value="TreeGrafter"/>
</dbReference>
<dbReference type="GO" id="GO:0035870">
    <property type="term" value="F:dITP diphosphatase activity"/>
    <property type="evidence" value="ECO:0007669"/>
    <property type="project" value="RHEA"/>
</dbReference>
<dbReference type="GO" id="GO:0036220">
    <property type="term" value="F:ITP diphosphatase activity"/>
    <property type="evidence" value="ECO:0007669"/>
    <property type="project" value="UniProtKB-EC"/>
</dbReference>
<dbReference type="GO" id="GO:0046872">
    <property type="term" value="F:metal ion binding"/>
    <property type="evidence" value="ECO:0007669"/>
    <property type="project" value="UniProtKB-KW"/>
</dbReference>
<dbReference type="GO" id="GO:0000166">
    <property type="term" value="F:nucleotide binding"/>
    <property type="evidence" value="ECO:0007669"/>
    <property type="project" value="UniProtKB-KW"/>
</dbReference>
<dbReference type="GO" id="GO:0017111">
    <property type="term" value="F:ribonucleoside triphosphate phosphatase activity"/>
    <property type="evidence" value="ECO:0007669"/>
    <property type="project" value="InterPro"/>
</dbReference>
<dbReference type="GO" id="GO:0036222">
    <property type="term" value="F:XTP diphosphatase activity"/>
    <property type="evidence" value="ECO:0007669"/>
    <property type="project" value="RHEA"/>
</dbReference>
<dbReference type="GO" id="GO:0009117">
    <property type="term" value="P:nucleotide metabolic process"/>
    <property type="evidence" value="ECO:0007669"/>
    <property type="project" value="UniProtKB-KW"/>
</dbReference>
<dbReference type="GO" id="GO:0009146">
    <property type="term" value="P:purine nucleoside triphosphate catabolic process"/>
    <property type="evidence" value="ECO:0007669"/>
    <property type="project" value="UniProtKB-UniRule"/>
</dbReference>
<dbReference type="CDD" id="cd00515">
    <property type="entry name" value="HAM1"/>
    <property type="match status" value="1"/>
</dbReference>
<dbReference type="FunFam" id="3.90.950.10:FF:000001">
    <property type="entry name" value="dITP/XTP pyrophosphatase"/>
    <property type="match status" value="1"/>
</dbReference>
<dbReference type="Gene3D" id="3.90.950.10">
    <property type="match status" value="1"/>
</dbReference>
<dbReference type="HAMAP" id="MF_01405">
    <property type="entry name" value="Non_canon_purine_NTPase"/>
    <property type="match status" value="1"/>
</dbReference>
<dbReference type="InterPro" id="IPR020922">
    <property type="entry name" value="dITP/XTP_pyrophosphatase"/>
</dbReference>
<dbReference type="InterPro" id="IPR029001">
    <property type="entry name" value="ITPase-like_fam"/>
</dbReference>
<dbReference type="InterPro" id="IPR002637">
    <property type="entry name" value="RdgB/HAM1"/>
</dbReference>
<dbReference type="NCBIfam" id="TIGR00042">
    <property type="entry name" value="RdgB/HAM1 family non-canonical purine NTP pyrophosphatase"/>
    <property type="match status" value="1"/>
</dbReference>
<dbReference type="PANTHER" id="PTHR11067:SF9">
    <property type="entry name" value="INOSINE TRIPHOSPHATE PYROPHOSPHATASE"/>
    <property type="match status" value="1"/>
</dbReference>
<dbReference type="PANTHER" id="PTHR11067">
    <property type="entry name" value="INOSINE TRIPHOSPHATE PYROPHOSPHATASE/HAM1 PROTEIN"/>
    <property type="match status" value="1"/>
</dbReference>
<dbReference type="Pfam" id="PF01725">
    <property type="entry name" value="Ham1p_like"/>
    <property type="match status" value="1"/>
</dbReference>
<dbReference type="SUPFAM" id="SSF52972">
    <property type="entry name" value="ITPase-like"/>
    <property type="match status" value="1"/>
</dbReference>
<comment type="function">
    <text evidence="1">Pyrophosphatase that catalyzes the hydrolysis of nucleoside triphosphates to their monophosphate derivatives, with a high preference for the non-canonical purine nucleotides XTP (xanthosine triphosphate), dITP (deoxyinosine triphosphate) and ITP. Seems to function as a house-cleaning enzyme that removes non-canonical purine nucleotides from the nucleotide pool, thus preventing their incorporation into DNA/RNA and avoiding chromosomal lesions.</text>
</comment>
<comment type="catalytic activity">
    <reaction evidence="1">
        <text>XTP + H2O = XMP + diphosphate + H(+)</text>
        <dbReference type="Rhea" id="RHEA:28610"/>
        <dbReference type="ChEBI" id="CHEBI:15377"/>
        <dbReference type="ChEBI" id="CHEBI:15378"/>
        <dbReference type="ChEBI" id="CHEBI:33019"/>
        <dbReference type="ChEBI" id="CHEBI:57464"/>
        <dbReference type="ChEBI" id="CHEBI:61314"/>
        <dbReference type="EC" id="3.6.1.66"/>
    </reaction>
</comment>
<comment type="catalytic activity">
    <reaction evidence="1">
        <text>dITP + H2O = dIMP + diphosphate + H(+)</text>
        <dbReference type="Rhea" id="RHEA:28342"/>
        <dbReference type="ChEBI" id="CHEBI:15377"/>
        <dbReference type="ChEBI" id="CHEBI:15378"/>
        <dbReference type="ChEBI" id="CHEBI:33019"/>
        <dbReference type="ChEBI" id="CHEBI:61194"/>
        <dbReference type="ChEBI" id="CHEBI:61382"/>
        <dbReference type="EC" id="3.6.1.66"/>
    </reaction>
</comment>
<comment type="catalytic activity">
    <reaction evidence="1">
        <text>ITP + H2O = IMP + diphosphate + H(+)</text>
        <dbReference type="Rhea" id="RHEA:29399"/>
        <dbReference type="ChEBI" id="CHEBI:15377"/>
        <dbReference type="ChEBI" id="CHEBI:15378"/>
        <dbReference type="ChEBI" id="CHEBI:33019"/>
        <dbReference type="ChEBI" id="CHEBI:58053"/>
        <dbReference type="ChEBI" id="CHEBI:61402"/>
        <dbReference type="EC" id="3.6.1.66"/>
    </reaction>
</comment>
<comment type="cofactor">
    <cofactor evidence="1">
        <name>Mg(2+)</name>
        <dbReference type="ChEBI" id="CHEBI:18420"/>
    </cofactor>
    <text evidence="1">Binds 1 Mg(2+) ion per subunit.</text>
</comment>
<comment type="subunit">
    <text evidence="1">Homodimer.</text>
</comment>
<comment type="similarity">
    <text evidence="1">Belongs to the HAM1 NTPase family.</text>
</comment>
<protein>
    <recommendedName>
        <fullName evidence="1">dITP/XTP pyrophosphatase</fullName>
        <ecNumber evidence="1">3.6.1.66</ecNumber>
    </recommendedName>
    <alternativeName>
        <fullName evidence="1">Non-canonical purine NTP pyrophosphatase</fullName>
    </alternativeName>
    <alternativeName>
        <fullName evidence="1">Non-standard purine NTP pyrophosphatase</fullName>
    </alternativeName>
    <alternativeName>
        <fullName evidence="1">Nucleoside-triphosphate diphosphatase</fullName>
    </alternativeName>
    <alternativeName>
        <fullName evidence="1">Nucleoside-triphosphate pyrophosphatase</fullName>
        <shortName evidence="1">NTPase</shortName>
    </alternativeName>
</protein>
<organism>
    <name type="scientific">Thermotoga petrophila (strain ATCC BAA-488 / DSM 13995 / JCM 10881 / RKU-1)</name>
    <dbReference type="NCBI Taxonomy" id="390874"/>
    <lineage>
        <taxon>Bacteria</taxon>
        <taxon>Thermotogati</taxon>
        <taxon>Thermotogota</taxon>
        <taxon>Thermotogae</taxon>
        <taxon>Thermotogales</taxon>
        <taxon>Thermotogaceae</taxon>
        <taxon>Thermotoga</taxon>
    </lineage>
</organism>
<reference key="1">
    <citation type="submission" date="2007-05" db="EMBL/GenBank/DDBJ databases">
        <title>Complete sequence of Thermotoga petrophila RKU-1.</title>
        <authorList>
            <consortium name="US DOE Joint Genome Institute"/>
            <person name="Copeland A."/>
            <person name="Lucas S."/>
            <person name="Lapidus A."/>
            <person name="Barry K."/>
            <person name="Glavina del Rio T."/>
            <person name="Dalin E."/>
            <person name="Tice H."/>
            <person name="Pitluck S."/>
            <person name="Sims D."/>
            <person name="Brettin T."/>
            <person name="Bruce D."/>
            <person name="Detter J.C."/>
            <person name="Han C."/>
            <person name="Tapia R."/>
            <person name="Schmutz J."/>
            <person name="Larimer F."/>
            <person name="Land M."/>
            <person name="Hauser L."/>
            <person name="Kyrpides N."/>
            <person name="Mikhailova N."/>
            <person name="Nelson K."/>
            <person name="Gogarten J.P."/>
            <person name="Noll K."/>
            <person name="Richardson P."/>
        </authorList>
    </citation>
    <scope>NUCLEOTIDE SEQUENCE [LARGE SCALE GENOMIC DNA]</scope>
    <source>
        <strain>ATCC BAA-488 / DSM 13995 / JCM 10881 / RKU-1</strain>
    </source>
</reference>
<accession>A5IKR2</accession>
<evidence type="ECO:0000255" key="1">
    <source>
        <dbReference type="HAMAP-Rule" id="MF_01405"/>
    </source>
</evidence>